<comment type="function">
    <text evidence="1">Is required not only for elongation of protein synthesis but also for the initiation of all mRNA translation through initiator tRNA(fMet) aminoacylation.</text>
</comment>
<comment type="catalytic activity">
    <reaction evidence="1">
        <text>tRNA(Met) + L-methionine + ATP = L-methionyl-tRNA(Met) + AMP + diphosphate</text>
        <dbReference type="Rhea" id="RHEA:13481"/>
        <dbReference type="Rhea" id="RHEA-COMP:9667"/>
        <dbReference type="Rhea" id="RHEA-COMP:9698"/>
        <dbReference type="ChEBI" id="CHEBI:30616"/>
        <dbReference type="ChEBI" id="CHEBI:33019"/>
        <dbReference type="ChEBI" id="CHEBI:57844"/>
        <dbReference type="ChEBI" id="CHEBI:78442"/>
        <dbReference type="ChEBI" id="CHEBI:78530"/>
        <dbReference type="ChEBI" id="CHEBI:456215"/>
        <dbReference type="EC" id="6.1.1.10"/>
    </reaction>
</comment>
<comment type="cofactor">
    <cofactor evidence="1">
        <name>Zn(2+)</name>
        <dbReference type="ChEBI" id="CHEBI:29105"/>
    </cofactor>
    <text evidence="1">Binds 1 zinc ion per subunit.</text>
</comment>
<comment type="subunit">
    <text evidence="1">Homodimer.</text>
</comment>
<comment type="subcellular location">
    <subcellularLocation>
        <location evidence="1">Cytoplasm</location>
    </subcellularLocation>
</comment>
<comment type="similarity">
    <text evidence="1">Belongs to the class-I aminoacyl-tRNA synthetase family. MetG type 1 subfamily.</text>
</comment>
<dbReference type="EC" id="6.1.1.10" evidence="1"/>
<dbReference type="EMBL" id="CP001252">
    <property type="protein sequence ID" value="ACK46391.1"/>
    <property type="molecule type" value="Genomic_DNA"/>
</dbReference>
<dbReference type="RefSeq" id="WP_012587482.1">
    <property type="nucleotide sequence ID" value="NC_011663.1"/>
</dbReference>
<dbReference type="SMR" id="B8E958"/>
<dbReference type="KEGG" id="sbp:Sbal223_1886"/>
<dbReference type="HOGENOM" id="CLU_009710_7_0_6"/>
<dbReference type="Proteomes" id="UP000002507">
    <property type="component" value="Chromosome"/>
</dbReference>
<dbReference type="GO" id="GO:0005829">
    <property type="term" value="C:cytosol"/>
    <property type="evidence" value="ECO:0007669"/>
    <property type="project" value="TreeGrafter"/>
</dbReference>
<dbReference type="GO" id="GO:0005524">
    <property type="term" value="F:ATP binding"/>
    <property type="evidence" value="ECO:0007669"/>
    <property type="project" value="UniProtKB-UniRule"/>
</dbReference>
<dbReference type="GO" id="GO:0046872">
    <property type="term" value="F:metal ion binding"/>
    <property type="evidence" value="ECO:0007669"/>
    <property type="project" value="UniProtKB-KW"/>
</dbReference>
<dbReference type="GO" id="GO:0004825">
    <property type="term" value="F:methionine-tRNA ligase activity"/>
    <property type="evidence" value="ECO:0007669"/>
    <property type="project" value="UniProtKB-UniRule"/>
</dbReference>
<dbReference type="GO" id="GO:0000049">
    <property type="term" value="F:tRNA binding"/>
    <property type="evidence" value="ECO:0007669"/>
    <property type="project" value="UniProtKB-KW"/>
</dbReference>
<dbReference type="GO" id="GO:0006431">
    <property type="term" value="P:methionyl-tRNA aminoacylation"/>
    <property type="evidence" value="ECO:0007669"/>
    <property type="project" value="UniProtKB-UniRule"/>
</dbReference>
<dbReference type="CDD" id="cd07957">
    <property type="entry name" value="Anticodon_Ia_Met"/>
    <property type="match status" value="1"/>
</dbReference>
<dbReference type="CDD" id="cd00814">
    <property type="entry name" value="MetRS_core"/>
    <property type="match status" value="1"/>
</dbReference>
<dbReference type="CDD" id="cd02800">
    <property type="entry name" value="tRNA_bind_EcMetRS_like"/>
    <property type="match status" value="1"/>
</dbReference>
<dbReference type="FunFam" id="1.10.730.10:FF:000005">
    <property type="entry name" value="Methionine--tRNA ligase"/>
    <property type="match status" value="1"/>
</dbReference>
<dbReference type="FunFam" id="2.20.28.20:FF:000001">
    <property type="entry name" value="Methionine--tRNA ligase"/>
    <property type="match status" value="1"/>
</dbReference>
<dbReference type="FunFam" id="2.40.50.140:FF:000042">
    <property type="entry name" value="Methionine--tRNA ligase"/>
    <property type="match status" value="1"/>
</dbReference>
<dbReference type="Gene3D" id="3.40.50.620">
    <property type="entry name" value="HUPs"/>
    <property type="match status" value="1"/>
</dbReference>
<dbReference type="Gene3D" id="1.10.730.10">
    <property type="entry name" value="Isoleucyl-tRNA Synthetase, Domain 1"/>
    <property type="match status" value="1"/>
</dbReference>
<dbReference type="Gene3D" id="2.20.28.20">
    <property type="entry name" value="Methionyl-tRNA synthetase, Zn-domain"/>
    <property type="match status" value="1"/>
</dbReference>
<dbReference type="Gene3D" id="2.40.50.140">
    <property type="entry name" value="Nucleic acid-binding proteins"/>
    <property type="match status" value="1"/>
</dbReference>
<dbReference type="HAMAP" id="MF_00098">
    <property type="entry name" value="Met_tRNA_synth_type1"/>
    <property type="match status" value="1"/>
</dbReference>
<dbReference type="InterPro" id="IPR001412">
    <property type="entry name" value="aa-tRNA-synth_I_CS"/>
</dbReference>
<dbReference type="InterPro" id="IPR041872">
    <property type="entry name" value="Anticodon_Met"/>
</dbReference>
<dbReference type="InterPro" id="IPR004495">
    <property type="entry name" value="Met-tRNA-synth_bsu_C"/>
</dbReference>
<dbReference type="InterPro" id="IPR023458">
    <property type="entry name" value="Met-tRNA_ligase_1"/>
</dbReference>
<dbReference type="InterPro" id="IPR014758">
    <property type="entry name" value="Met-tRNA_synth"/>
</dbReference>
<dbReference type="InterPro" id="IPR015413">
    <property type="entry name" value="Methionyl/Leucyl_tRNA_Synth"/>
</dbReference>
<dbReference type="InterPro" id="IPR033911">
    <property type="entry name" value="MetRS_core"/>
</dbReference>
<dbReference type="InterPro" id="IPR029038">
    <property type="entry name" value="MetRS_Zn"/>
</dbReference>
<dbReference type="InterPro" id="IPR012340">
    <property type="entry name" value="NA-bd_OB-fold"/>
</dbReference>
<dbReference type="InterPro" id="IPR014729">
    <property type="entry name" value="Rossmann-like_a/b/a_fold"/>
</dbReference>
<dbReference type="InterPro" id="IPR002547">
    <property type="entry name" value="tRNA-bd_dom"/>
</dbReference>
<dbReference type="InterPro" id="IPR009080">
    <property type="entry name" value="tRNAsynth_Ia_anticodon-bd"/>
</dbReference>
<dbReference type="NCBIfam" id="TIGR00398">
    <property type="entry name" value="metG"/>
    <property type="match status" value="1"/>
</dbReference>
<dbReference type="NCBIfam" id="TIGR00399">
    <property type="entry name" value="metG_C_term"/>
    <property type="match status" value="1"/>
</dbReference>
<dbReference type="NCBIfam" id="NF001100">
    <property type="entry name" value="PRK00133.1"/>
    <property type="match status" value="1"/>
</dbReference>
<dbReference type="PANTHER" id="PTHR45765">
    <property type="entry name" value="METHIONINE--TRNA LIGASE"/>
    <property type="match status" value="1"/>
</dbReference>
<dbReference type="PANTHER" id="PTHR45765:SF1">
    <property type="entry name" value="METHIONINE--TRNA LIGASE, CYTOPLASMIC"/>
    <property type="match status" value="1"/>
</dbReference>
<dbReference type="Pfam" id="PF19303">
    <property type="entry name" value="Anticodon_3"/>
    <property type="match status" value="1"/>
</dbReference>
<dbReference type="Pfam" id="PF09334">
    <property type="entry name" value="tRNA-synt_1g"/>
    <property type="match status" value="1"/>
</dbReference>
<dbReference type="Pfam" id="PF01588">
    <property type="entry name" value="tRNA_bind"/>
    <property type="match status" value="1"/>
</dbReference>
<dbReference type="PRINTS" id="PR01041">
    <property type="entry name" value="TRNASYNTHMET"/>
</dbReference>
<dbReference type="SUPFAM" id="SSF47323">
    <property type="entry name" value="Anticodon-binding domain of a subclass of class I aminoacyl-tRNA synthetases"/>
    <property type="match status" value="1"/>
</dbReference>
<dbReference type="SUPFAM" id="SSF57770">
    <property type="entry name" value="Methionyl-tRNA synthetase (MetRS), Zn-domain"/>
    <property type="match status" value="1"/>
</dbReference>
<dbReference type="SUPFAM" id="SSF50249">
    <property type="entry name" value="Nucleic acid-binding proteins"/>
    <property type="match status" value="1"/>
</dbReference>
<dbReference type="SUPFAM" id="SSF52374">
    <property type="entry name" value="Nucleotidylyl transferase"/>
    <property type="match status" value="1"/>
</dbReference>
<dbReference type="PROSITE" id="PS00178">
    <property type="entry name" value="AA_TRNA_LIGASE_I"/>
    <property type="match status" value="1"/>
</dbReference>
<dbReference type="PROSITE" id="PS50886">
    <property type="entry name" value="TRBD"/>
    <property type="match status" value="1"/>
</dbReference>
<organism>
    <name type="scientific">Shewanella baltica (strain OS223)</name>
    <dbReference type="NCBI Taxonomy" id="407976"/>
    <lineage>
        <taxon>Bacteria</taxon>
        <taxon>Pseudomonadati</taxon>
        <taxon>Pseudomonadota</taxon>
        <taxon>Gammaproteobacteria</taxon>
        <taxon>Alteromonadales</taxon>
        <taxon>Shewanellaceae</taxon>
        <taxon>Shewanella</taxon>
    </lineage>
</organism>
<proteinExistence type="inferred from homology"/>
<name>SYM_SHEB2</name>
<gene>
    <name evidence="1" type="primary">metG</name>
    <name type="ordered locus">Sbal223_1886</name>
</gene>
<sequence>MATSQRKILVTSALPYANGPIHLGHMLEYIQTDIWSRYQKLRGHECHYICADDAHGTPIMLKAQQLGIAPEDMIAQVNKEHQQDFADFNVAFDNYHSTHSEENRLMASDIYLKLRDNGYIKSKSISQLFDPEKSMFLPDRFVKGTCPKCKSPDQYGDNCDSCGATYSPTELINPKSAVSGATPVMKDTEHFFFDLPAFEGMLKEWTRSGALQVEMANKLDEWFEQGLQQWDITRDAPYFGFEIPDAPGKYFYVWLDAPIGYMGSFKNLCAKRPELSFDEFWGKDSTAEVYHFIGKDIVYFHSLFWPAMLHGSGYRQPNSVYAHGYVTVNGAKMSKSKGTFIKARTYLDHLDPEYLRYYYAAKLSSRIDDLDLNLEDFAQRVNSDLVGKLVNLASRTAGFITKRFDGKLAKINDTTLTEAFLAKQDVIADFYESREYGKAMREIMALADIANGFVADAAPWQMVKHDDQQEAAHQVCSNALNLFRILVTYLKPVLPRLAQDVEAFFQLPLTWDALSQDLAGHEIAPFKAMMQRVELDKVNAMVADSKDNLQVTADAPKTAAPEKTAKASSVSSEPLVDDPISETINFDDFAKIDLRIARIVKAEHVADADKLLKLQLDIGGETRQVFAGIKSAYSPEDLEGKLTVMVANLAPRKMRFGMSEGMVLAAGPGGSDLWILEPHEGAQPGMRVK</sequence>
<evidence type="ECO:0000255" key="1">
    <source>
        <dbReference type="HAMAP-Rule" id="MF_00098"/>
    </source>
</evidence>
<reference key="1">
    <citation type="submission" date="2008-12" db="EMBL/GenBank/DDBJ databases">
        <title>Complete sequence of chromosome of Shewanella baltica OS223.</title>
        <authorList>
            <consortium name="US DOE Joint Genome Institute"/>
            <person name="Lucas S."/>
            <person name="Copeland A."/>
            <person name="Lapidus A."/>
            <person name="Glavina del Rio T."/>
            <person name="Dalin E."/>
            <person name="Tice H."/>
            <person name="Bruce D."/>
            <person name="Goodwin L."/>
            <person name="Pitluck S."/>
            <person name="Chertkov O."/>
            <person name="Meincke L."/>
            <person name="Brettin T."/>
            <person name="Detter J.C."/>
            <person name="Han C."/>
            <person name="Kuske C.R."/>
            <person name="Larimer F."/>
            <person name="Land M."/>
            <person name="Hauser L."/>
            <person name="Kyrpides N."/>
            <person name="Ovchinnikova G."/>
            <person name="Brettar I."/>
            <person name="Rodrigues J."/>
            <person name="Konstantinidis K."/>
            <person name="Tiedje J."/>
        </authorList>
    </citation>
    <scope>NUCLEOTIDE SEQUENCE [LARGE SCALE GENOMIC DNA]</scope>
    <source>
        <strain>OS223</strain>
    </source>
</reference>
<keyword id="KW-0030">Aminoacyl-tRNA synthetase</keyword>
<keyword id="KW-0067">ATP-binding</keyword>
<keyword id="KW-0963">Cytoplasm</keyword>
<keyword id="KW-0436">Ligase</keyword>
<keyword id="KW-0479">Metal-binding</keyword>
<keyword id="KW-0547">Nucleotide-binding</keyword>
<keyword id="KW-0648">Protein biosynthesis</keyword>
<keyword id="KW-0694">RNA-binding</keyword>
<keyword id="KW-0820">tRNA-binding</keyword>
<keyword id="KW-0862">Zinc</keyword>
<protein>
    <recommendedName>
        <fullName evidence="1">Methionine--tRNA ligase</fullName>
        <ecNumber evidence="1">6.1.1.10</ecNumber>
    </recommendedName>
    <alternativeName>
        <fullName evidence="1">Methionyl-tRNA synthetase</fullName>
        <shortName evidence="1">MetRS</shortName>
    </alternativeName>
</protein>
<feature type="chain" id="PRO_1000118739" description="Methionine--tRNA ligase">
    <location>
        <begin position="1"/>
        <end position="689"/>
    </location>
</feature>
<feature type="domain" description="tRNA-binding" evidence="1">
    <location>
        <begin position="588"/>
        <end position="689"/>
    </location>
</feature>
<feature type="short sequence motif" description="'HIGH' region">
    <location>
        <begin position="15"/>
        <end position="25"/>
    </location>
</feature>
<feature type="short sequence motif" description="'KMSKS' region">
    <location>
        <begin position="332"/>
        <end position="336"/>
    </location>
</feature>
<feature type="binding site" evidence="1">
    <location>
        <position position="146"/>
    </location>
    <ligand>
        <name>Zn(2+)</name>
        <dbReference type="ChEBI" id="CHEBI:29105"/>
    </ligand>
</feature>
<feature type="binding site" evidence="1">
    <location>
        <position position="149"/>
    </location>
    <ligand>
        <name>Zn(2+)</name>
        <dbReference type="ChEBI" id="CHEBI:29105"/>
    </ligand>
</feature>
<feature type="binding site" evidence="1">
    <location>
        <position position="159"/>
    </location>
    <ligand>
        <name>Zn(2+)</name>
        <dbReference type="ChEBI" id="CHEBI:29105"/>
    </ligand>
</feature>
<feature type="binding site" evidence="1">
    <location>
        <position position="162"/>
    </location>
    <ligand>
        <name>Zn(2+)</name>
        <dbReference type="ChEBI" id="CHEBI:29105"/>
    </ligand>
</feature>
<feature type="binding site" evidence="1">
    <location>
        <position position="335"/>
    </location>
    <ligand>
        <name>ATP</name>
        <dbReference type="ChEBI" id="CHEBI:30616"/>
    </ligand>
</feature>
<accession>B8E958</accession>